<keyword id="KW-0066">ATP synthesis</keyword>
<keyword id="KW-0997">Cell inner membrane</keyword>
<keyword id="KW-1003">Cell membrane</keyword>
<keyword id="KW-0138">CF(0)</keyword>
<keyword id="KW-0375">Hydrogen ion transport</keyword>
<keyword id="KW-0406">Ion transport</keyword>
<keyword id="KW-0472">Membrane</keyword>
<keyword id="KW-1185">Reference proteome</keyword>
<keyword id="KW-0812">Transmembrane</keyword>
<keyword id="KW-1133">Transmembrane helix</keyword>
<keyword id="KW-0813">Transport</keyword>
<organism>
    <name type="scientific">Escherichia coli O6:H1 (strain CFT073 / ATCC 700928 / UPEC)</name>
    <dbReference type="NCBI Taxonomy" id="199310"/>
    <lineage>
        <taxon>Bacteria</taxon>
        <taxon>Pseudomonadati</taxon>
        <taxon>Pseudomonadota</taxon>
        <taxon>Gammaproteobacteria</taxon>
        <taxon>Enterobacterales</taxon>
        <taxon>Enterobacteriaceae</taxon>
        <taxon>Escherichia</taxon>
    </lineage>
</organism>
<gene>
    <name evidence="1" type="primary">atpF</name>
    <name type="ordered locus">c4664</name>
</gene>
<feature type="chain" id="PRO_0000082373" description="ATP synthase subunit b">
    <location>
        <begin position="1"/>
        <end position="156"/>
    </location>
</feature>
<feature type="transmembrane region" description="Helical" evidence="1">
    <location>
        <begin position="11"/>
        <end position="31"/>
    </location>
</feature>
<reference key="1">
    <citation type="journal article" date="2002" name="Proc. Natl. Acad. Sci. U.S.A.">
        <title>Extensive mosaic structure revealed by the complete genome sequence of uropathogenic Escherichia coli.</title>
        <authorList>
            <person name="Welch R.A."/>
            <person name="Burland V."/>
            <person name="Plunkett G. III"/>
            <person name="Redford P."/>
            <person name="Roesch P."/>
            <person name="Rasko D."/>
            <person name="Buckles E.L."/>
            <person name="Liou S.-R."/>
            <person name="Boutin A."/>
            <person name="Hackett J."/>
            <person name="Stroud D."/>
            <person name="Mayhew G.F."/>
            <person name="Rose D.J."/>
            <person name="Zhou S."/>
            <person name="Schwartz D.C."/>
            <person name="Perna N.T."/>
            <person name="Mobley H.L.T."/>
            <person name="Donnenberg M.S."/>
            <person name="Blattner F.R."/>
        </authorList>
    </citation>
    <scope>NUCLEOTIDE SEQUENCE [LARGE SCALE GENOMIC DNA]</scope>
    <source>
        <strain>CFT073 / ATCC 700928 / UPEC</strain>
    </source>
</reference>
<proteinExistence type="inferred from homology"/>
<sequence length="156" mass="17264">MNLNATILGQAIAFVLFVLFCMKYVWPPLMAAIEKRQKEIADGLASAERAHKDLDLAKASATDQLKKAKAEAQVIIEQANKRRSQILDEAKAEAEQERTKIVAQAQAEIEAERKRAREELRKQVAILAVAGAEKIIERSVDEAANSDIVDKLVAEL</sequence>
<name>ATPF_ECOL6</name>
<protein>
    <recommendedName>
        <fullName evidence="1">ATP synthase subunit b</fullName>
    </recommendedName>
    <alternativeName>
        <fullName evidence="1">ATP synthase F(0) sector subunit b</fullName>
    </alternativeName>
    <alternativeName>
        <fullName evidence="1">ATPase subunit I</fullName>
    </alternativeName>
    <alternativeName>
        <fullName evidence="1">F-type ATPase subunit b</fullName>
        <shortName evidence="1">F-ATPase subunit b</shortName>
    </alternativeName>
</protein>
<evidence type="ECO:0000255" key="1">
    <source>
        <dbReference type="HAMAP-Rule" id="MF_01398"/>
    </source>
</evidence>
<accession>P0ABA1</accession>
<accession>P00859</accession>
<dbReference type="EMBL" id="AE014075">
    <property type="protein sequence ID" value="AAN83096.1"/>
    <property type="molecule type" value="Genomic_DNA"/>
</dbReference>
<dbReference type="RefSeq" id="WP_001052219.1">
    <property type="nucleotide sequence ID" value="NZ_CP051263.1"/>
</dbReference>
<dbReference type="SMR" id="P0ABA1"/>
<dbReference type="STRING" id="199310.c4664"/>
<dbReference type="GeneID" id="93778231"/>
<dbReference type="KEGG" id="ecc:c4664"/>
<dbReference type="eggNOG" id="COG0711">
    <property type="taxonomic scope" value="Bacteria"/>
</dbReference>
<dbReference type="HOGENOM" id="CLU_079215_4_5_6"/>
<dbReference type="BioCyc" id="ECOL199310:C4664-MONOMER"/>
<dbReference type="Proteomes" id="UP000001410">
    <property type="component" value="Chromosome"/>
</dbReference>
<dbReference type="GO" id="GO:0005886">
    <property type="term" value="C:plasma membrane"/>
    <property type="evidence" value="ECO:0007669"/>
    <property type="project" value="UniProtKB-SubCell"/>
</dbReference>
<dbReference type="GO" id="GO:0045259">
    <property type="term" value="C:proton-transporting ATP synthase complex"/>
    <property type="evidence" value="ECO:0007669"/>
    <property type="project" value="UniProtKB-KW"/>
</dbReference>
<dbReference type="GO" id="GO:0046933">
    <property type="term" value="F:proton-transporting ATP synthase activity, rotational mechanism"/>
    <property type="evidence" value="ECO:0007669"/>
    <property type="project" value="UniProtKB-UniRule"/>
</dbReference>
<dbReference type="GO" id="GO:0046961">
    <property type="term" value="F:proton-transporting ATPase activity, rotational mechanism"/>
    <property type="evidence" value="ECO:0007669"/>
    <property type="project" value="TreeGrafter"/>
</dbReference>
<dbReference type="CDD" id="cd06503">
    <property type="entry name" value="ATP-synt_Fo_b"/>
    <property type="match status" value="1"/>
</dbReference>
<dbReference type="FunFam" id="1.20.5.620:FF:000001">
    <property type="entry name" value="ATP synthase subunit b"/>
    <property type="match status" value="1"/>
</dbReference>
<dbReference type="Gene3D" id="1.20.5.620">
    <property type="entry name" value="F1F0 ATP synthase subunit B, membrane domain"/>
    <property type="match status" value="1"/>
</dbReference>
<dbReference type="HAMAP" id="MF_01398">
    <property type="entry name" value="ATP_synth_b_bprime"/>
    <property type="match status" value="1"/>
</dbReference>
<dbReference type="InterPro" id="IPR028987">
    <property type="entry name" value="ATP_synth_B-like_membr_sf"/>
</dbReference>
<dbReference type="InterPro" id="IPR002146">
    <property type="entry name" value="ATP_synth_b/b'su_bac/chlpt"/>
</dbReference>
<dbReference type="InterPro" id="IPR005864">
    <property type="entry name" value="ATP_synth_F0_bsu_bac"/>
</dbReference>
<dbReference type="InterPro" id="IPR050059">
    <property type="entry name" value="ATP_synthase_B_chain"/>
</dbReference>
<dbReference type="NCBIfam" id="TIGR01144">
    <property type="entry name" value="ATP_synt_b"/>
    <property type="match status" value="1"/>
</dbReference>
<dbReference type="NCBIfam" id="NF004411">
    <property type="entry name" value="PRK05759.1-2"/>
    <property type="match status" value="1"/>
</dbReference>
<dbReference type="NCBIfam" id="NF004413">
    <property type="entry name" value="PRK05759.1-4"/>
    <property type="match status" value="1"/>
</dbReference>
<dbReference type="PANTHER" id="PTHR33445:SF1">
    <property type="entry name" value="ATP SYNTHASE SUBUNIT B"/>
    <property type="match status" value="1"/>
</dbReference>
<dbReference type="PANTHER" id="PTHR33445">
    <property type="entry name" value="ATP SYNTHASE SUBUNIT B', CHLOROPLASTIC"/>
    <property type="match status" value="1"/>
</dbReference>
<dbReference type="Pfam" id="PF00430">
    <property type="entry name" value="ATP-synt_B"/>
    <property type="match status" value="1"/>
</dbReference>
<dbReference type="SUPFAM" id="SSF81573">
    <property type="entry name" value="F1F0 ATP synthase subunit B, membrane domain"/>
    <property type="match status" value="1"/>
</dbReference>
<comment type="function">
    <text evidence="1">F(1)F(0) ATP synthase produces ATP from ADP in the presence of a proton or sodium gradient. F-type ATPases consist of two structural domains, F(1) containing the extramembraneous catalytic core and F(0) containing the membrane proton channel, linked together by a central stalk and a peripheral stalk. During catalysis, ATP synthesis in the catalytic domain of F(1) is coupled via a rotary mechanism of the central stalk subunits to proton translocation.</text>
</comment>
<comment type="function">
    <text evidence="1">Component of the F(0) channel, it forms part of the peripheral stalk, linking F(1) to F(0).</text>
</comment>
<comment type="subunit">
    <text evidence="1">F-type ATPases have 2 components, F(1) - the catalytic core - and F(0) - the membrane proton channel. F(1) has five subunits: alpha(3), beta(3), gamma(1), delta(1), epsilon(1). F(0) has three main subunits: a(1), b(2) and c(10-14). The alpha and beta chains form an alternating ring which encloses part of the gamma chain. F(1) is attached to F(0) by a central stalk formed by the gamma and epsilon chains, while a peripheral stalk is formed by the delta and b chains.</text>
</comment>
<comment type="subcellular location">
    <subcellularLocation>
        <location evidence="1">Cell inner membrane</location>
        <topology evidence="1">Single-pass membrane protein</topology>
    </subcellularLocation>
</comment>
<comment type="similarity">
    <text evidence="1">Belongs to the ATPase B chain family.</text>
</comment>